<dbReference type="EMBL" id="CP000924">
    <property type="protein sequence ID" value="ABY94867.1"/>
    <property type="molecule type" value="Genomic_DNA"/>
</dbReference>
<dbReference type="RefSeq" id="WP_003869136.1">
    <property type="nucleotide sequence ID" value="NC_010321.1"/>
</dbReference>
<dbReference type="SMR" id="B0K9Q4"/>
<dbReference type="STRING" id="340099.Teth39_1213"/>
<dbReference type="KEGG" id="tpd:Teth39_1213"/>
<dbReference type="eggNOG" id="COG0779">
    <property type="taxonomic scope" value="Bacteria"/>
</dbReference>
<dbReference type="HOGENOM" id="CLU_070525_2_0_9"/>
<dbReference type="Proteomes" id="UP000002156">
    <property type="component" value="Chromosome"/>
</dbReference>
<dbReference type="GO" id="GO:0005829">
    <property type="term" value="C:cytosol"/>
    <property type="evidence" value="ECO:0007669"/>
    <property type="project" value="TreeGrafter"/>
</dbReference>
<dbReference type="GO" id="GO:0000028">
    <property type="term" value="P:ribosomal small subunit assembly"/>
    <property type="evidence" value="ECO:0007669"/>
    <property type="project" value="TreeGrafter"/>
</dbReference>
<dbReference type="GO" id="GO:0006412">
    <property type="term" value="P:translation"/>
    <property type="evidence" value="ECO:0007669"/>
    <property type="project" value="TreeGrafter"/>
</dbReference>
<dbReference type="CDD" id="cd01734">
    <property type="entry name" value="YlxS_C"/>
    <property type="match status" value="1"/>
</dbReference>
<dbReference type="FunFam" id="3.30.300.70:FF:000001">
    <property type="entry name" value="Ribosome maturation factor RimP"/>
    <property type="match status" value="1"/>
</dbReference>
<dbReference type="Gene3D" id="2.30.30.180">
    <property type="entry name" value="Ribosome maturation factor RimP, C-terminal domain"/>
    <property type="match status" value="1"/>
</dbReference>
<dbReference type="Gene3D" id="3.30.300.70">
    <property type="entry name" value="RimP-like superfamily, N-terminal"/>
    <property type="match status" value="1"/>
</dbReference>
<dbReference type="HAMAP" id="MF_01077">
    <property type="entry name" value="RimP"/>
    <property type="match status" value="1"/>
</dbReference>
<dbReference type="InterPro" id="IPR003728">
    <property type="entry name" value="Ribosome_maturation_RimP"/>
</dbReference>
<dbReference type="InterPro" id="IPR028998">
    <property type="entry name" value="RimP_C"/>
</dbReference>
<dbReference type="InterPro" id="IPR036847">
    <property type="entry name" value="RimP_C_sf"/>
</dbReference>
<dbReference type="InterPro" id="IPR028989">
    <property type="entry name" value="RimP_N"/>
</dbReference>
<dbReference type="InterPro" id="IPR035956">
    <property type="entry name" value="RimP_N_sf"/>
</dbReference>
<dbReference type="NCBIfam" id="NF000928">
    <property type="entry name" value="PRK00092.1-2"/>
    <property type="match status" value="1"/>
</dbReference>
<dbReference type="PANTHER" id="PTHR33867">
    <property type="entry name" value="RIBOSOME MATURATION FACTOR RIMP"/>
    <property type="match status" value="1"/>
</dbReference>
<dbReference type="PANTHER" id="PTHR33867:SF1">
    <property type="entry name" value="RIBOSOME MATURATION FACTOR RIMP"/>
    <property type="match status" value="1"/>
</dbReference>
<dbReference type="Pfam" id="PF17384">
    <property type="entry name" value="DUF150_C"/>
    <property type="match status" value="1"/>
</dbReference>
<dbReference type="Pfam" id="PF02576">
    <property type="entry name" value="RimP_N"/>
    <property type="match status" value="1"/>
</dbReference>
<dbReference type="SUPFAM" id="SSF74942">
    <property type="entry name" value="YhbC-like, C-terminal domain"/>
    <property type="match status" value="1"/>
</dbReference>
<dbReference type="SUPFAM" id="SSF75420">
    <property type="entry name" value="YhbC-like, N-terminal domain"/>
    <property type="match status" value="1"/>
</dbReference>
<evidence type="ECO:0000255" key="1">
    <source>
        <dbReference type="HAMAP-Rule" id="MF_01077"/>
    </source>
</evidence>
<keyword id="KW-0963">Cytoplasm</keyword>
<keyword id="KW-1185">Reference proteome</keyword>
<keyword id="KW-0690">Ribosome biogenesis</keyword>
<feature type="chain" id="PRO_1000136801" description="Ribosome maturation factor RimP">
    <location>
        <begin position="1"/>
        <end position="151"/>
    </location>
</feature>
<proteinExistence type="inferred from homology"/>
<reference key="1">
    <citation type="submission" date="2008-01" db="EMBL/GenBank/DDBJ databases">
        <title>Complete sequence of Thermoanaerobacter pseudethanolicus 39E.</title>
        <authorList>
            <person name="Copeland A."/>
            <person name="Lucas S."/>
            <person name="Lapidus A."/>
            <person name="Barry K."/>
            <person name="Glavina del Rio T."/>
            <person name="Dalin E."/>
            <person name="Tice H."/>
            <person name="Pitluck S."/>
            <person name="Bruce D."/>
            <person name="Goodwin L."/>
            <person name="Saunders E."/>
            <person name="Brettin T."/>
            <person name="Detter J.C."/>
            <person name="Han C."/>
            <person name="Schmutz J."/>
            <person name="Larimer F."/>
            <person name="Land M."/>
            <person name="Hauser L."/>
            <person name="Kyrpides N."/>
            <person name="Lykidis A."/>
            <person name="Hemme C."/>
            <person name="Fields M.W."/>
            <person name="He Z."/>
            <person name="Zhou J."/>
            <person name="Richardson P."/>
        </authorList>
    </citation>
    <scope>NUCLEOTIDE SEQUENCE [LARGE SCALE GENOMIC DNA]</scope>
    <source>
        <strain>ATCC 33223 / DSM 2355 / 39E</strain>
    </source>
</reference>
<name>RIMP_THEP3</name>
<accession>B0K9Q4</accession>
<sequence>MSKIEQIAKDLVMPVLEKNNFELVDVEYKKEGSHWYLRVYIDKEGGITLDDCQLVSEYLSDRLDEVDPIEHSYILEVSSPGLDRPLKKPRDFERNIGKEIEISLYAPIDKRKKFEGELIEFTGDKIIILYNGERKEFDMKNVSLVKPVIKF</sequence>
<gene>
    <name evidence="1" type="primary">rimP</name>
    <name type="ordered locus">Teth39_1213</name>
</gene>
<comment type="function">
    <text evidence="1">Required for maturation of 30S ribosomal subunits.</text>
</comment>
<comment type="subcellular location">
    <subcellularLocation>
        <location evidence="1">Cytoplasm</location>
    </subcellularLocation>
</comment>
<comment type="similarity">
    <text evidence="1">Belongs to the RimP family.</text>
</comment>
<organism>
    <name type="scientific">Thermoanaerobacter pseudethanolicus (strain ATCC 33223 / 39E)</name>
    <name type="common">Clostridium thermohydrosulfuricum</name>
    <dbReference type="NCBI Taxonomy" id="340099"/>
    <lineage>
        <taxon>Bacteria</taxon>
        <taxon>Bacillati</taxon>
        <taxon>Bacillota</taxon>
        <taxon>Clostridia</taxon>
        <taxon>Thermoanaerobacterales</taxon>
        <taxon>Thermoanaerobacteraceae</taxon>
        <taxon>Thermoanaerobacter</taxon>
    </lineage>
</organism>
<protein>
    <recommendedName>
        <fullName evidence="1">Ribosome maturation factor RimP</fullName>
    </recommendedName>
</protein>